<accession>B8CIB4</accession>
<feature type="chain" id="PRO_1000188191" description="RNA polymerase-associated protein RapA">
    <location>
        <begin position="1"/>
        <end position="968"/>
    </location>
</feature>
<feature type="domain" description="Helicase ATP-binding" evidence="1">
    <location>
        <begin position="163"/>
        <end position="332"/>
    </location>
</feature>
<feature type="domain" description="Helicase C-terminal" evidence="1">
    <location>
        <begin position="491"/>
        <end position="678"/>
    </location>
</feature>
<feature type="short sequence motif" description="DEAH box">
    <location>
        <begin position="278"/>
        <end position="281"/>
    </location>
</feature>
<feature type="binding site" evidence="1">
    <location>
        <begin position="176"/>
        <end position="183"/>
    </location>
    <ligand>
        <name>ATP</name>
        <dbReference type="ChEBI" id="CHEBI:30616"/>
    </ligand>
</feature>
<comment type="function">
    <text evidence="1">Transcription regulator that activates transcription by stimulating RNA polymerase (RNAP) recycling in case of stress conditions such as supercoiled DNA or high salt concentrations. Probably acts by releasing the RNAP, when it is trapped or immobilized on tightly supercoiled DNA. Does not activate transcription on linear DNA. Probably not involved in DNA repair.</text>
</comment>
<comment type="subunit">
    <text evidence="1">Interacts with the RNAP. Has a higher affinity for the core RNAP than for the holoenzyme. Its ATPase activity is stimulated by binding to RNAP.</text>
</comment>
<comment type="similarity">
    <text evidence="1">Belongs to the SNF2/RAD54 helicase family. RapA subfamily.</text>
</comment>
<evidence type="ECO:0000255" key="1">
    <source>
        <dbReference type="HAMAP-Rule" id="MF_01821"/>
    </source>
</evidence>
<proteinExistence type="inferred from homology"/>
<reference key="1">
    <citation type="journal article" date="2008" name="PLoS ONE">
        <title>Environmental adaptation: genomic analysis of the piezotolerant and psychrotolerant deep-sea iron reducing bacterium Shewanella piezotolerans WP3.</title>
        <authorList>
            <person name="Wang F."/>
            <person name="Wang J."/>
            <person name="Jian H."/>
            <person name="Zhang B."/>
            <person name="Li S."/>
            <person name="Wang F."/>
            <person name="Zeng X."/>
            <person name="Gao L."/>
            <person name="Bartlett D.H."/>
            <person name="Yu J."/>
            <person name="Hu S."/>
            <person name="Xiao X."/>
        </authorList>
    </citation>
    <scope>NUCLEOTIDE SEQUENCE [LARGE SCALE GENOMIC DNA]</scope>
    <source>
        <strain>WP3 / JCM 13877</strain>
    </source>
</reference>
<protein>
    <recommendedName>
        <fullName evidence="1">RNA polymerase-associated protein RapA</fullName>
        <ecNumber evidence="1">3.6.4.-</ecNumber>
    </recommendedName>
    <alternativeName>
        <fullName evidence="1">ATP-dependent helicase HepA</fullName>
    </alternativeName>
</protein>
<keyword id="KW-0010">Activator</keyword>
<keyword id="KW-0067">ATP-binding</keyword>
<keyword id="KW-0238">DNA-binding</keyword>
<keyword id="KW-0347">Helicase</keyword>
<keyword id="KW-0378">Hydrolase</keyword>
<keyword id="KW-0547">Nucleotide-binding</keyword>
<keyword id="KW-0804">Transcription</keyword>
<keyword id="KW-0805">Transcription regulation</keyword>
<sequence length="968" mass="108946">MPFSLGQRWISDTESELGLGTVVGMEGRMVTVLFSATGENRLFSRSEAPLTRVIFNPGDKVESHDEWSLTVTEVEEKDNLIIYHGIHSETGEQASLRETLLNHNIRFNKPQDRLFAGQIDRMDRFGVRYQCQLLRNKLATSDLLGLQGPRVGLIPHQQWIAHEVGQRFAPRVLLADEVGLGKTIEAGLIIHQQLLTGRAERILVIVPDTLRHQWLVEMLRRFNLRFSVFDEDRCVEAYADNDNPFYTEQLVICSLELLRKKKRLEQALDADWDLMVVDEAHHLEWSEDAPSRAYKVVEALSEVVPGVLLLTATPDQLGHQSHFARLRLLDPDRFYDYPSFLKEEESYKDVATAADALACGESLSSEAIASLTQLLSEKDISDSINLIQDASANADKRNQAREELLQELLDRHGTGRVLYRNSRASVKGFPTRNLHIHPQPMPEQYVTASRVSAMMNKHLDTNAKVRQVLSPEKIYQDFDSGSASWWKFDPRVDWLIDFLKTNRSKKVLIIASQAETALSLEEALRTREGIQATVFHEGMSIIERDKAGAYFAQETGGAQALICSEIGSEGRNFQFASHLVLFDLPLNPDLLEQRIGRLDRIGQKNDVEIHLPYLAGTAQERLMQWYHQGLNAFECTCPSGHILFGEFSGELLETLTTDDESSLETLLDNTKSRYQELKVAMEQGRDKLLEINSHGGERANKLVESLAARDEDTQLIGSVIRLWDIIGVEQEDSGENAIVLHPSEHMMFPTYPGLPEDGITVTFDRDMALSRDDIALITQEHPIVQTGLDLITSSETGTTSVAVLKNKALPAGTVFLELIYMADASAPKSSQLYRYLPPTPIRILLDKSGNNLSDNVTYESFDRQLSAVNRHIASKLVTASQAILHPLFAKGETFAANELKLLTETAREKMTQQLTGELERLKALKAVNPNIRDEELTHLSEQMSELNRYLDSSQLQLDAIRLVLVSHA</sequence>
<name>RAPA_SHEPW</name>
<dbReference type="EC" id="3.6.4.-" evidence="1"/>
<dbReference type="EMBL" id="CP000472">
    <property type="protein sequence ID" value="ACJ27390.1"/>
    <property type="molecule type" value="Genomic_DNA"/>
</dbReference>
<dbReference type="RefSeq" id="WP_020910771.1">
    <property type="nucleotide sequence ID" value="NC_011566.1"/>
</dbReference>
<dbReference type="SMR" id="B8CIB4"/>
<dbReference type="STRING" id="225849.swp_0566"/>
<dbReference type="KEGG" id="swp:swp_0566"/>
<dbReference type="eggNOG" id="COG0553">
    <property type="taxonomic scope" value="Bacteria"/>
</dbReference>
<dbReference type="HOGENOM" id="CLU_011520_0_0_6"/>
<dbReference type="OrthoDB" id="9814088at2"/>
<dbReference type="Proteomes" id="UP000000753">
    <property type="component" value="Chromosome"/>
</dbReference>
<dbReference type="GO" id="GO:0005524">
    <property type="term" value="F:ATP binding"/>
    <property type="evidence" value="ECO:0007669"/>
    <property type="project" value="UniProtKB-UniRule"/>
</dbReference>
<dbReference type="GO" id="GO:0003677">
    <property type="term" value="F:DNA binding"/>
    <property type="evidence" value="ECO:0007669"/>
    <property type="project" value="UniProtKB-KW"/>
</dbReference>
<dbReference type="GO" id="GO:0004386">
    <property type="term" value="F:helicase activity"/>
    <property type="evidence" value="ECO:0007669"/>
    <property type="project" value="UniProtKB-UniRule"/>
</dbReference>
<dbReference type="GO" id="GO:0016817">
    <property type="term" value="F:hydrolase activity, acting on acid anhydrides"/>
    <property type="evidence" value="ECO:0007669"/>
    <property type="project" value="InterPro"/>
</dbReference>
<dbReference type="GO" id="GO:0006355">
    <property type="term" value="P:regulation of DNA-templated transcription"/>
    <property type="evidence" value="ECO:0007669"/>
    <property type="project" value="UniProtKB-UniRule"/>
</dbReference>
<dbReference type="CDD" id="cd18011">
    <property type="entry name" value="DEXDc_RapA"/>
    <property type="match status" value="1"/>
</dbReference>
<dbReference type="CDD" id="cd18793">
    <property type="entry name" value="SF2_C_SNF"/>
    <property type="match status" value="1"/>
</dbReference>
<dbReference type="Gene3D" id="2.30.30.140">
    <property type="match status" value="1"/>
</dbReference>
<dbReference type="Gene3D" id="2.30.30.930">
    <property type="match status" value="1"/>
</dbReference>
<dbReference type="Gene3D" id="3.30.360.80">
    <property type="match status" value="1"/>
</dbReference>
<dbReference type="Gene3D" id="6.10.140.1500">
    <property type="match status" value="1"/>
</dbReference>
<dbReference type="Gene3D" id="6.10.140.2230">
    <property type="match status" value="1"/>
</dbReference>
<dbReference type="Gene3D" id="3.40.50.300">
    <property type="entry name" value="P-loop containing nucleotide triphosphate hydrolases"/>
    <property type="match status" value="1"/>
</dbReference>
<dbReference type="Gene3D" id="3.40.50.10810">
    <property type="entry name" value="Tandem AAA-ATPase domain"/>
    <property type="match status" value="1"/>
</dbReference>
<dbReference type="HAMAP" id="MF_01821">
    <property type="entry name" value="Helicase_RapA"/>
    <property type="match status" value="1"/>
</dbReference>
<dbReference type="InterPro" id="IPR014001">
    <property type="entry name" value="Helicase_ATP-bd"/>
</dbReference>
<dbReference type="InterPro" id="IPR001650">
    <property type="entry name" value="Helicase_C-like"/>
</dbReference>
<dbReference type="InterPro" id="IPR023949">
    <property type="entry name" value="Helicase_RapA"/>
</dbReference>
<dbReference type="InterPro" id="IPR027417">
    <property type="entry name" value="P-loop_NTPase"/>
</dbReference>
<dbReference type="InterPro" id="IPR022737">
    <property type="entry name" value="RapA_C"/>
</dbReference>
<dbReference type="InterPro" id="IPR038718">
    <property type="entry name" value="SNF2-like_sf"/>
</dbReference>
<dbReference type="InterPro" id="IPR049730">
    <property type="entry name" value="SNF2/RAD54-like_C"/>
</dbReference>
<dbReference type="InterPro" id="IPR000330">
    <property type="entry name" value="SNF2_N"/>
</dbReference>
<dbReference type="InterPro" id="IPR040765">
    <property type="entry name" value="Tudor_1_RapA"/>
</dbReference>
<dbReference type="InterPro" id="IPR040766">
    <property type="entry name" value="Tudor_2_RapA"/>
</dbReference>
<dbReference type="NCBIfam" id="NF003426">
    <property type="entry name" value="PRK04914.1"/>
    <property type="match status" value="1"/>
</dbReference>
<dbReference type="PANTHER" id="PTHR45766">
    <property type="entry name" value="DNA ANNEALING HELICASE AND ENDONUCLEASE ZRANB3 FAMILY MEMBER"/>
    <property type="match status" value="1"/>
</dbReference>
<dbReference type="PANTHER" id="PTHR45766:SF6">
    <property type="entry name" value="SWI_SNF-RELATED MATRIX-ASSOCIATED ACTIN-DEPENDENT REGULATOR OF CHROMATIN SUBFAMILY A-LIKE PROTEIN 1"/>
    <property type="match status" value="1"/>
</dbReference>
<dbReference type="Pfam" id="PF00271">
    <property type="entry name" value="Helicase_C"/>
    <property type="match status" value="1"/>
</dbReference>
<dbReference type="Pfam" id="PF12137">
    <property type="entry name" value="RapA_C"/>
    <property type="match status" value="1"/>
</dbReference>
<dbReference type="Pfam" id="PF00176">
    <property type="entry name" value="SNF2-rel_dom"/>
    <property type="match status" value="1"/>
</dbReference>
<dbReference type="Pfam" id="PF18339">
    <property type="entry name" value="Tudor_1_RapA"/>
    <property type="match status" value="1"/>
</dbReference>
<dbReference type="Pfam" id="PF18337">
    <property type="entry name" value="Tudor_RapA"/>
    <property type="match status" value="1"/>
</dbReference>
<dbReference type="SMART" id="SM00487">
    <property type="entry name" value="DEXDc"/>
    <property type="match status" value="1"/>
</dbReference>
<dbReference type="SMART" id="SM00490">
    <property type="entry name" value="HELICc"/>
    <property type="match status" value="1"/>
</dbReference>
<dbReference type="SUPFAM" id="SSF52540">
    <property type="entry name" value="P-loop containing nucleoside triphosphate hydrolases"/>
    <property type="match status" value="2"/>
</dbReference>
<dbReference type="PROSITE" id="PS51192">
    <property type="entry name" value="HELICASE_ATP_BIND_1"/>
    <property type="match status" value="1"/>
</dbReference>
<dbReference type="PROSITE" id="PS51194">
    <property type="entry name" value="HELICASE_CTER"/>
    <property type="match status" value="1"/>
</dbReference>
<gene>
    <name evidence="1" type="primary">rapA</name>
    <name type="ordered locus">swp_0566</name>
</gene>
<organism>
    <name type="scientific">Shewanella piezotolerans (strain WP3 / JCM 13877)</name>
    <dbReference type="NCBI Taxonomy" id="225849"/>
    <lineage>
        <taxon>Bacteria</taxon>
        <taxon>Pseudomonadati</taxon>
        <taxon>Pseudomonadota</taxon>
        <taxon>Gammaproteobacteria</taxon>
        <taxon>Alteromonadales</taxon>
        <taxon>Shewanellaceae</taxon>
        <taxon>Shewanella</taxon>
    </lineage>
</organism>